<name>MOAA_PASMU</name>
<evidence type="ECO:0000255" key="1">
    <source>
        <dbReference type="HAMAP-Rule" id="MF_01225"/>
    </source>
</evidence>
<evidence type="ECO:0000255" key="2">
    <source>
        <dbReference type="PROSITE-ProRule" id="PRU01266"/>
    </source>
</evidence>
<reference key="1">
    <citation type="journal article" date="2001" name="Proc. Natl. Acad. Sci. U.S.A.">
        <title>Complete genomic sequence of Pasteurella multocida Pm70.</title>
        <authorList>
            <person name="May B.J."/>
            <person name="Zhang Q."/>
            <person name="Li L.L."/>
            <person name="Paustian M.L."/>
            <person name="Whittam T.S."/>
            <person name="Kapur V."/>
        </authorList>
    </citation>
    <scope>NUCLEOTIDE SEQUENCE [LARGE SCALE GENOMIC DNA]</scope>
    <source>
        <strain>Pm70</strain>
    </source>
</reference>
<accession>Q9CN21</accession>
<comment type="function">
    <text evidence="1">Catalyzes the cyclization of GTP to (8S)-3',8-cyclo-7,8-dihydroguanosine 5'-triphosphate.</text>
</comment>
<comment type="catalytic activity">
    <reaction evidence="1">
        <text>GTP + AH2 + S-adenosyl-L-methionine = (8S)-3',8-cyclo-7,8-dihydroguanosine 5'-triphosphate + 5'-deoxyadenosine + L-methionine + A + H(+)</text>
        <dbReference type="Rhea" id="RHEA:49576"/>
        <dbReference type="ChEBI" id="CHEBI:13193"/>
        <dbReference type="ChEBI" id="CHEBI:15378"/>
        <dbReference type="ChEBI" id="CHEBI:17319"/>
        <dbReference type="ChEBI" id="CHEBI:17499"/>
        <dbReference type="ChEBI" id="CHEBI:37565"/>
        <dbReference type="ChEBI" id="CHEBI:57844"/>
        <dbReference type="ChEBI" id="CHEBI:59789"/>
        <dbReference type="ChEBI" id="CHEBI:131766"/>
        <dbReference type="EC" id="4.1.99.22"/>
    </reaction>
</comment>
<comment type="cofactor">
    <cofactor evidence="1">
        <name>[4Fe-4S] cluster</name>
        <dbReference type="ChEBI" id="CHEBI:49883"/>
    </cofactor>
    <text evidence="1">Binds 2 [4Fe-4S] clusters. Binds 1 [4Fe-4S] cluster coordinated with 3 cysteines and an exchangeable S-adenosyl-L-methionine and 1 [4Fe-4S] cluster coordinated with 3 cysteines and the GTP-derived substrate.</text>
</comment>
<comment type="pathway">
    <text evidence="1">Cofactor biosynthesis; molybdopterin biosynthesis.</text>
</comment>
<comment type="subunit">
    <text evidence="1">Monomer and homodimer.</text>
</comment>
<comment type="similarity">
    <text evidence="1">Belongs to the radical SAM superfamily. MoaA family.</text>
</comment>
<keyword id="KW-0004">4Fe-4S</keyword>
<keyword id="KW-0342">GTP-binding</keyword>
<keyword id="KW-0408">Iron</keyword>
<keyword id="KW-0411">Iron-sulfur</keyword>
<keyword id="KW-0456">Lyase</keyword>
<keyword id="KW-0479">Metal-binding</keyword>
<keyword id="KW-0501">Molybdenum cofactor biosynthesis</keyword>
<keyword id="KW-0547">Nucleotide-binding</keyword>
<keyword id="KW-1185">Reference proteome</keyword>
<keyword id="KW-0949">S-adenosyl-L-methionine</keyword>
<proteinExistence type="inferred from homology"/>
<protein>
    <recommendedName>
        <fullName evidence="1">GTP 3',8-cyclase</fullName>
        <ecNumber evidence="1">4.1.99.22</ecNumber>
    </recommendedName>
    <alternativeName>
        <fullName evidence="1">Molybdenum cofactor biosynthesis protein A</fullName>
    </alternativeName>
</protein>
<sequence>MQTIPIKHVGNDPLVDAFQRRYYYLRLSITDVCNFRCNYCLPNGYQPESNKPSFLTLNEIRLVVKSFANMGTEKVRITGGEPTLRKDFLPIVETIAQNPTIKQIALTTNGYRMAKDVAAWKEAGITSINVSIDSLDARMFHRITGIDKFEDVMRGLERAFEVGYQKIKVNSVLMRDLNDADFNQFLTWIKDKPIQMRFIELMQTGEMDHFFQQHHVSGQLLADKLINAGWTLQSKGLLDGPAKVFKHPDYVGEVGLIMPYEKNFCASCNRLRVSAKGKLHLCLFGEEGITLRDLLQSDDQQLQLQARISSALQGKREHHFLHQGDSGVRANLASIGG</sequence>
<gene>
    <name evidence="1" type="primary">moaA</name>
    <name type="ordered locus">PM0625</name>
</gene>
<feature type="chain" id="PRO_0000152979" description="GTP 3',8-cyclase">
    <location>
        <begin position="1"/>
        <end position="337"/>
    </location>
</feature>
<feature type="domain" description="Radical SAM core" evidence="2">
    <location>
        <begin position="17"/>
        <end position="242"/>
    </location>
</feature>
<feature type="binding site" evidence="1">
    <location>
        <position position="26"/>
    </location>
    <ligand>
        <name>GTP</name>
        <dbReference type="ChEBI" id="CHEBI:37565"/>
    </ligand>
</feature>
<feature type="binding site" evidence="1">
    <location>
        <position position="33"/>
    </location>
    <ligand>
        <name>[4Fe-4S] cluster</name>
        <dbReference type="ChEBI" id="CHEBI:49883"/>
        <label>1</label>
        <note>4Fe-4S-S-AdoMet</note>
    </ligand>
</feature>
<feature type="binding site" evidence="1">
    <location>
        <position position="37"/>
    </location>
    <ligand>
        <name>[4Fe-4S] cluster</name>
        <dbReference type="ChEBI" id="CHEBI:49883"/>
        <label>1</label>
        <note>4Fe-4S-S-AdoMet</note>
    </ligand>
</feature>
<feature type="binding site" evidence="1">
    <location>
        <position position="39"/>
    </location>
    <ligand>
        <name>S-adenosyl-L-methionine</name>
        <dbReference type="ChEBI" id="CHEBI:59789"/>
    </ligand>
</feature>
<feature type="binding site" evidence="1">
    <location>
        <position position="40"/>
    </location>
    <ligand>
        <name>[4Fe-4S] cluster</name>
        <dbReference type="ChEBI" id="CHEBI:49883"/>
        <label>1</label>
        <note>4Fe-4S-S-AdoMet</note>
    </ligand>
</feature>
<feature type="binding site" evidence="1">
    <location>
        <position position="76"/>
    </location>
    <ligand>
        <name>GTP</name>
        <dbReference type="ChEBI" id="CHEBI:37565"/>
    </ligand>
</feature>
<feature type="binding site" evidence="1">
    <location>
        <position position="80"/>
    </location>
    <ligand>
        <name>S-adenosyl-L-methionine</name>
        <dbReference type="ChEBI" id="CHEBI:59789"/>
    </ligand>
</feature>
<feature type="binding site" evidence="1">
    <location>
        <position position="107"/>
    </location>
    <ligand>
        <name>GTP</name>
        <dbReference type="ChEBI" id="CHEBI:37565"/>
    </ligand>
</feature>
<feature type="binding site" evidence="1">
    <location>
        <position position="131"/>
    </location>
    <ligand>
        <name>S-adenosyl-L-methionine</name>
        <dbReference type="ChEBI" id="CHEBI:59789"/>
    </ligand>
</feature>
<feature type="binding site" evidence="1">
    <location>
        <position position="168"/>
    </location>
    <ligand>
        <name>GTP</name>
        <dbReference type="ChEBI" id="CHEBI:37565"/>
    </ligand>
</feature>
<feature type="binding site" evidence="1">
    <location>
        <position position="202"/>
    </location>
    <ligand>
        <name>S-adenosyl-L-methionine</name>
        <dbReference type="ChEBI" id="CHEBI:59789"/>
    </ligand>
</feature>
<feature type="binding site" evidence="1">
    <location>
        <position position="265"/>
    </location>
    <ligand>
        <name>[4Fe-4S] cluster</name>
        <dbReference type="ChEBI" id="CHEBI:49883"/>
        <label>2</label>
        <note>4Fe-4S-substrate</note>
    </ligand>
</feature>
<feature type="binding site" evidence="1">
    <location>
        <position position="268"/>
    </location>
    <ligand>
        <name>[4Fe-4S] cluster</name>
        <dbReference type="ChEBI" id="CHEBI:49883"/>
        <label>2</label>
        <note>4Fe-4S-substrate</note>
    </ligand>
</feature>
<feature type="binding site" evidence="1">
    <location>
        <begin position="270"/>
        <end position="272"/>
    </location>
    <ligand>
        <name>GTP</name>
        <dbReference type="ChEBI" id="CHEBI:37565"/>
    </ligand>
</feature>
<feature type="binding site" evidence="1">
    <location>
        <position position="282"/>
    </location>
    <ligand>
        <name>[4Fe-4S] cluster</name>
        <dbReference type="ChEBI" id="CHEBI:49883"/>
        <label>2</label>
        <note>4Fe-4S-substrate</note>
    </ligand>
</feature>
<dbReference type="EC" id="4.1.99.22" evidence="1"/>
<dbReference type="EMBL" id="AE004439">
    <property type="protein sequence ID" value="AAK02709.1"/>
    <property type="molecule type" value="Genomic_DNA"/>
</dbReference>
<dbReference type="RefSeq" id="WP_010906760.1">
    <property type="nucleotide sequence ID" value="NC_002663.1"/>
</dbReference>
<dbReference type="SMR" id="Q9CN21"/>
<dbReference type="STRING" id="272843.PM0625"/>
<dbReference type="EnsemblBacteria" id="AAK02709">
    <property type="protein sequence ID" value="AAK02709"/>
    <property type="gene ID" value="PM0625"/>
</dbReference>
<dbReference type="KEGG" id="pmu:PM0625"/>
<dbReference type="PATRIC" id="fig|272843.6.peg.633"/>
<dbReference type="HOGENOM" id="CLU_009273_0_1_6"/>
<dbReference type="OrthoDB" id="9763993at2"/>
<dbReference type="UniPathway" id="UPA00344"/>
<dbReference type="Proteomes" id="UP000000809">
    <property type="component" value="Chromosome"/>
</dbReference>
<dbReference type="GO" id="GO:0051539">
    <property type="term" value="F:4 iron, 4 sulfur cluster binding"/>
    <property type="evidence" value="ECO:0007669"/>
    <property type="project" value="UniProtKB-UniRule"/>
</dbReference>
<dbReference type="GO" id="GO:0061799">
    <property type="term" value="F:cyclic pyranopterin monophosphate synthase activity"/>
    <property type="evidence" value="ECO:0007669"/>
    <property type="project" value="TreeGrafter"/>
</dbReference>
<dbReference type="GO" id="GO:0061798">
    <property type="term" value="F:GTP 3',8'-cyclase activity"/>
    <property type="evidence" value="ECO:0007669"/>
    <property type="project" value="UniProtKB-UniRule"/>
</dbReference>
<dbReference type="GO" id="GO:0005525">
    <property type="term" value="F:GTP binding"/>
    <property type="evidence" value="ECO:0007669"/>
    <property type="project" value="UniProtKB-UniRule"/>
</dbReference>
<dbReference type="GO" id="GO:0046872">
    <property type="term" value="F:metal ion binding"/>
    <property type="evidence" value="ECO:0007669"/>
    <property type="project" value="UniProtKB-KW"/>
</dbReference>
<dbReference type="GO" id="GO:1904047">
    <property type="term" value="F:S-adenosyl-L-methionine binding"/>
    <property type="evidence" value="ECO:0007669"/>
    <property type="project" value="UniProtKB-UniRule"/>
</dbReference>
<dbReference type="GO" id="GO:0006777">
    <property type="term" value="P:Mo-molybdopterin cofactor biosynthetic process"/>
    <property type="evidence" value="ECO:0007669"/>
    <property type="project" value="UniProtKB-UniRule"/>
</dbReference>
<dbReference type="CDD" id="cd01335">
    <property type="entry name" value="Radical_SAM"/>
    <property type="match status" value="1"/>
</dbReference>
<dbReference type="CDD" id="cd21117">
    <property type="entry name" value="Twitch_MoaA"/>
    <property type="match status" value="1"/>
</dbReference>
<dbReference type="FunFam" id="3.20.20.70:FF:000057">
    <property type="entry name" value="GTP 3',8-cyclase"/>
    <property type="match status" value="1"/>
</dbReference>
<dbReference type="Gene3D" id="3.20.20.70">
    <property type="entry name" value="Aldolase class I"/>
    <property type="match status" value="1"/>
</dbReference>
<dbReference type="HAMAP" id="MF_01225_B">
    <property type="entry name" value="MoaA_B"/>
    <property type="match status" value="1"/>
</dbReference>
<dbReference type="InterPro" id="IPR013785">
    <property type="entry name" value="Aldolase_TIM"/>
</dbReference>
<dbReference type="InterPro" id="IPR006638">
    <property type="entry name" value="Elp3/MiaA/NifB-like_rSAM"/>
</dbReference>
<dbReference type="InterPro" id="IPR013483">
    <property type="entry name" value="MoaA"/>
</dbReference>
<dbReference type="InterPro" id="IPR000385">
    <property type="entry name" value="MoaA_NifB_PqqE_Fe-S-bd_CS"/>
</dbReference>
<dbReference type="InterPro" id="IPR010505">
    <property type="entry name" value="MoaA_twitch"/>
</dbReference>
<dbReference type="InterPro" id="IPR050105">
    <property type="entry name" value="MoCo_biosynth_MoaA/MoaC"/>
</dbReference>
<dbReference type="InterPro" id="IPR007197">
    <property type="entry name" value="rSAM"/>
</dbReference>
<dbReference type="NCBIfam" id="TIGR02666">
    <property type="entry name" value="moaA"/>
    <property type="match status" value="1"/>
</dbReference>
<dbReference type="PANTHER" id="PTHR22960:SF28">
    <property type="entry name" value="GTP 3',8-CYCLASE"/>
    <property type="match status" value="1"/>
</dbReference>
<dbReference type="PANTHER" id="PTHR22960">
    <property type="entry name" value="MOLYBDOPTERIN COFACTOR SYNTHESIS PROTEIN A"/>
    <property type="match status" value="1"/>
</dbReference>
<dbReference type="Pfam" id="PF13353">
    <property type="entry name" value="Fer4_12"/>
    <property type="match status" value="1"/>
</dbReference>
<dbReference type="Pfam" id="PF06463">
    <property type="entry name" value="Mob_synth_C"/>
    <property type="match status" value="1"/>
</dbReference>
<dbReference type="Pfam" id="PF04055">
    <property type="entry name" value="Radical_SAM"/>
    <property type="match status" value="1"/>
</dbReference>
<dbReference type="SFLD" id="SFLDG01383">
    <property type="entry name" value="cyclic_pyranopterin_phosphate"/>
    <property type="match status" value="1"/>
</dbReference>
<dbReference type="SFLD" id="SFLDG01067">
    <property type="entry name" value="SPASM/twitch_domain_containing"/>
    <property type="match status" value="1"/>
</dbReference>
<dbReference type="SMART" id="SM00729">
    <property type="entry name" value="Elp3"/>
    <property type="match status" value="1"/>
</dbReference>
<dbReference type="SUPFAM" id="SSF102114">
    <property type="entry name" value="Radical SAM enzymes"/>
    <property type="match status" value="1"/>
</dbReference>
<dbReference type="PROSITE" id="PS01305">
    <property type="entry name" value="MOAA_NIFB_PQQE"/>
    <property type="match status" value="1"/>
</dbReference>
<dbReference type="PROSITE" id="PS51918">
    <property type="entry name" value="RADICAL_SAM"/>
    <property type="match status" value="1"/>
</dbReference>
<organism>
    <name type="scientific">Pasteurella multocida (strain Pm70)</name>
    <dbReference type="NCBI Taxonomy" id="272843"/>
    <lineage>
        <taxon>Bacteria</taxon>
        <taxon>Pseudomonadati</taxon>
        <taxon>Pseudomonadota</taxon>
        <taxon>Gammaproteobacteria</taxon>
        <taxon>Pasteurellales</taxon>
        <taxon>Pasteurellaceae</taxon>
        <taxon>Pasteurella</taxon>
    </lineage>
</organism>